<proteinExistence type="inferred from homology"/>
<protein>
    <recommendedName>
        <fullName>HTH-type transcriptional regulator TcaR</fullName>
    </recommendedName>
</protein>
<feature type="chain" id="PRO_0000054400" description="HTH-type transcriptional regulator TcaR">
    <location>
        <begin position="1"/>
        <end position="151"/>
    </location>
</feature>
<feature type="domain" description="HTH marR-type" evidence="2">
    <location>
        <begin position="1"/>
        <end position="142"/>
    </location>
</feature>
<feature type="DNA-binding region" description="H-T-H motif" evidence="2">
    <location>
        <begin position="54"/>
        <end position="77"/>
    </location>
</feature>
<name>TCAR_STAAC</name>
<comment type="function">
    <text evidence="1">Involved in the antibiotic teicoplanin susceptibility. Inactivation of the tcaRAB operon leads to teicoplanin resistance (By similarity).</text>
</comment>
<comment type="function">
    <text evidence="1">Is a weak negative regulator of transcription of the icaABD operon.</text>
</comment>
<dbReference type="EMBL" id="AY008833">
    <property type="protein sequence ID" value="AAG23887.1"/>
    <property type="molecule type" value="Genomic_DNA"/>
</dbReference>
<dbReference type="EMBL" id="CP000046">
    <property type="protein sequence ID" value="AAW37181.1"/>
    <property type="molecule type" value="Genomic_DNA"/>
</dbReference>
<dbReference type="PIR" id="H90035">
    <property type="entry name" value="H90035"/>
</dbReference>
<dbReference type="RefSeq" id="WP_000238542.1">
    <property type="nucleotide sequence ID" value="NZ_JBGOFO010000004.1"/>
</dbReference>
<dbReference type="SMR" id="Q9F4G3"/>
<dbReference type="KEGG" id="sac:SACOL2353"/>
<dbReference type="HOGENOM" id="CLU_1721241_0_0_9"/>
<dbReference type="Proteomes" id="UP000000530">
    <property type="component" value="Chromosome"/>
</dbReference>
<dbReference type="GO" id="GO:0003677">
    <property type="term" value="F:DNA binding"/>
    <property type="evidence" value="ECO:0007669"/>
    <property type="project" value="UniProtKB-KW"/>
</dbReference>
<dbReference type="GO" id="GO:0003700">
    <property type="term" value="F:DNA-binding transcription factor activity"/>
    <property type="evidence" value="ECO:0007669"/>
    <property type="project" value="InterPro"/>
</dbReference>
<dbReference type="GO" id="GO:0006950">
    <property type="term" value="P:response to stress"/>
    <property type="evidence" value="ECO:0007669"/>
    <property type="project" value="TreeGrafter"/>
</dbReference>
<dbReference type="CDD" id="cd00090">
    <property type="entry name" value="HTH_ARSR"/>
    <property type="match status" value="1"/>
</dbReference>
<dbReference type="Gene3D" id="1.10.10.10">
    <property type="entry name" value="Winged helix-like DNA-binding domain superfamily/Winged helix DNA-binding domain"/>
    <property type="match status" value="1"/>
</dbReference>
<dbReference type="InterPro" id="IPR011991">
    <property type="entry name" value="ArsR-like_HTH"/>
</dbReference>
<dbReference type="InterPro" id="IPR000835">
    <property type="entry name" value="HTH_MarR-typ"/>
</dbReference>
<dbReference type="InterPro" id="IPR039422">
    <property type="entry name" value="MarR/SlyA-like"/>
</dbReference>
<dbReference type="InterPro" id="IPR036388">
    <property type="entry name" value="WH-like_DNA-bd_sf"/>
</dbReference>
<dbReference type="InterPro" id="IPR036390">
    <property type="entry name" value="WH_DNA-bd_sf"/>
</dbReference>
<dbReference type="PANTHER" id="PTHR33164:SF43">
    <property type="entry name" value="HTH-TYPE TRANSCRIPTIONAL REPRESSOR YETL"/>
    <property type="match status" value="1"/>
</dbReference>
<dbReference type="PANTHER" id="PTHR33164">
    <property type="entry name" value="TRANSCRIPTIONAL REGULATOR, MARR FAMILY"/>
    <property type="match status" value="1"/>
</dbReference>
<dbReference type="Pfam" id="PF12802">
    <property type="entry name" value="MarR_2"/>
    <property type="match status" value="1"/>
</dbReference>
<dbReference type="SMART" id="SM00347">
    <property type="entry name" value="HTH_MARR"/>
    <property type="match status" value="1"/>
</dbReference>
<dbReference type="SUPFAM" id="SSF46785">
    <property type="entry name" value="Winged helix' DNA-binding domain"/>
    <property type="match status" value="1"/>
</dbReference>
<dbReference type="PROSITE" id="PS50995">
    <property type="entry name" value="HTH_MARR_2"/>
    <property type="match status" value="1"/>
</dbReference>
<organism>
    <name type="scientific">Staphylococcus aureus (strain COL)</name>
    <dbReference type="NCBI Taxonomy" id="93062"/>
    <lineage>
        <taxon>Bacteria</taxon>
        <taxon>Bacillati</taxon>
        <taxon>Bacillota</taxon>
        <taxon>Bacilli</taxon>
        <taxon>Bacillales</taxon>
        <taxon>Staphylococcaceae</taxon>
        <taxon>Staphylococcus</taxon>
    </lineage>
</organism>
<sequence length="151" mass="17521">MVKHLQDHIQFLEQFINNVNALTAKMLKDLQNEYEISLEQSNVLGMLNKEPLTISEITQRQGVNKAAVSRRIKKLIDAKLVKLDKPNLNIDQRLKFITLTDKGRAYLKERNAIMTDIAQDITNDLNSEDIENVRQVLEVINHRIKTYSNHK</sequence>
<gene>
    <name type="primary">tcaR</name>
    <name type="ordered locus">SACOL2353</name>
</gene>
<evidence type="ECO:0000250" key="1"/>
<evidence type="ECO:0000255" key="2">
    <source>
        <dbReference type="PROSITE-ProRule" id="PRU00345"/>
    </source>
</evidence>
<accession>Q9F4G3</accession>
<accession>Q5HDJ8</accession>
<keyword id="KW-0238">DNA-binding</keyword>
<keyword id="KW-0678">Repressor</keyword>
<keyword id="KW-0804">Transcription</keyword>
<keyword id="KW-0805">Transcription regulation</keyword>
<reference key="1">
    <citation type="journal article" date="2000" name="Biochim. Biophys. Acta">
        <title>Inactivation of a novel three-cistronic operon tcaR-tcaA-tcaB increases teicoplanin resistance in Staphylococcus aureus.</title>
        <authorList>
            <person name="Brandenberger M."/>
            <person name="Tschierske M."/>
            <person name="Giachino P."/>
            <person name="Wada A."/>
            <person name="Berger-Baechi B."/>
        </authorList>
    </citation>
    <scope>NUCLEOTIDE SEQUENCE [GENOMIC DNA]</scope>
</reference>
<reference key="2">
    <citation type="journal article" date="2005" name="J. Bacteriol.">
        <title>Insights on evolution of virulence and resistance from the complete genome analysis of an early methicillin-resistant Staphylococcus aureus strain and a biofilm-producing methicillin-resistant Staphylococcus epidermidis strain.</title>
        <authorList>
            <person name="Gill S.R."/>
            <person name="Fouts D.E."/>
            <person name="Archer G.L."/>
            <person name="Mongodin E.F."/>
            <person name="DeBoy R.T."/>
            <person name="Ravel J."/>
            <person name="Paulsen I.T."/>
            <person name="Kolonay J.F."/>
            <person name="Brinkac L.M."/>
            <person name="Beanan M.J."/>
            <person name="Dodson R.J."/>
            <person name="Daugherty S.C."/>
            <person name="Madupu R."/>
            <person name="Angiuoli S.V."/>
            <person name="Durkin A.S."/>
            <person name="Haft D.H."/>
            <person name="Vamathevan J.J."/>
            <person name="Khouri H."/>
            <person name="Utterback T.R."/>
            <person name="Lee C."/>
            <person name="Dimitrov G."/>
            <person name="Jiang L."/>
            <person name="Qin H."/>
            <person name="Weidman J."/>
            <person name="Tran K."/>
            <person name="Kang K.H."/>
            <person name="Hance I.R."/>
            <person name="Nelson K.E."/>
            <person name="Fraser C.M."/>
        </authorList>
    </citation>
    <scope>NUCLEOTIDE SEQUENCE [LARGE SCALE GENOMIC DNA]</scope>
    <source>
        <strain>COL</strain>
    </source>
</reference>